<evidence type="ECO:0000250" key="1"/>
<evidence type="ECO:0000250" key="2">
    <source>
        <dbReference type="UniProtKB" id="Q8VCW8"/>
    </source>
</evidence>
<evidence type="ECO:0000250" key="3">
    <source>
        <dbReference type="UniProtKB" id="Q96CM8"/>
    </source>
</evidence>
<evidence type="ECO:0000255" key="4"/>
<evidence type="ECO:0000305" key="5"/>
<organism>
    <name type="scientific">Pongo abelii</name>
    <name type="common">Sumatran orangutan</name>
    <name type="synonym">Pongo pygmaeus abelii</name>
    <dbReference type="NCBI Taxonomy" id="9601"/>
    <lineage>
        <taxon>Eukaryota</taxon>
        <taxon>Metazoa</taxon>
        <taxon>Chordata</taxon>
        <taxon>Craniata</taxon>
        <taxon>Vertebrata</taxon>
        <taxon>Euteleostomi</taxon>
        <taxon>Mammalia</taxon>
        <taxon>Eutheria</taxon>
        <taxon>Euarchontoglires</taxon>
        <taxon>Primates</taxon>
        <taxon>Haplorrhini</taxon>
        <taxon>Catarrhini</taxon>
        <taxon>Hominidae</taxon>
        <taxon>Pongo</taxon>
    </lineage>
</organism>
<dbReference type="EC" id="6.2.1.2" evidence="3"/>
<dbReference type="EMBL" id="CR859419">
    <property type="protein sequence ID" value="CAH91591.1"/>
    <property type="molecule type" value="mRNA"/>
</dbReference>
<dbReference type="RefSeq" id="NP_001125938.1">
    <property type="nucleotide sequence ID" value="NM_001132466.1"/>
</dbReference>
<dbReference type="SMR" id="Q5R9G9"/>
<dbReference type="FunCoup" id="Q5R9G9">
    <property type="interactions" value="603"/>
</dbReference>
<dbReference type="STRING" id="9601.ENSPPYP00000009305"/>
<dbReference type="GeneID" id="100172872"/>
<dbReference type="KEGG" id="pon:100172872"/>
<dbReference type="CTD" id="80221"/>
<dbReference type="eggNOG" id="KOG1177">
    <property type="taxonomic scope" value="Eukaryota"/>
</dbReference>
<dbReference type="InParanoid" id="Q5R9G9"/>
<dbReference type="OrthoDB" id="10253115at2759"/>
<dbReference type="Proteomes" id="UP000001595">
    <property type="component" value="Unplaced"/>
</dbReference>
<dbReference type="GO" id="GO:0005739">
    <property type="term" value="C:mitochondrion"/>
    <property type="evidence" value="ECO:0007669"/>
    <property type="project" value="UniProtKB-SubCell"/>
</dbReference>
<dbReference type="GO" id="GO:0005524">
    <property type="term" value="F:ATP binding"/>
    <property type="evidence" value="ECO:0007669"/>
    <property type="project" value="UniProtKB-KW"/>
</dbReference>
<dbReference type="GO" id="GO:0031956">
    <property type="term" value="F:medium-chain fatty acid-CoA ligase activity"/>
    <property type="evidence" value="ECO:0000250"/>
    <property type="project" value="UniProtKB"/>
</dbReference>
<dbReference type="GO" id="GO:0006631">
    <property type="term" value="P:fatty acid metabolic process"/>
    <property type="evidence" value="ECO:0007669"/>
    <property type="project" value="UniProtKB-KW"/>
</dbReference>
<dbReference type="CDD" id="cd05917">
    <property type="entry name" value="FACL_like_2"/>
    <property type="match status" value="1"/>
</dbReference>
<dbReference type="FunFam" id="3.30.300.30:FF:000008">
    <property type="entry name" value="2,3-dihydroxybenzoate-AMP ligase"/>
    <property type="match status" value="1"/>
</dbReference>
<dbReference type="FunFam" id="3.40.50.12780:FF:000003">
    <property type="entry name" value="Long-chain-fatty-acid--CoA ligase FadD"/>
    <property type="match status" value="1"/>
</dbReference>
<dbReference type="Gene3D" id="3.30.300.30">
    <property type="match status" value="1"/>
</dbReference>
<dbReference type="Gene3D" id="3.40.50.12780">
    <property type="entry name" value="N-terminal domain of ligase-like"/>
    <property type="match status" value="1"/>
</dbReference>
<dbReference type="InterPro" id="IPR025110">
    <property type="entry name" value="AMP-bd_C"/>
</dbReference>
<dbReference type="InterPro" id="IPR045851">
    <property type="entry name" value="AMP-bd_C_sf"/>
</dbReference>
<dbReference type="InterPro" id="IPR020845">
    <property type="entry name" value="AMP-binding_CS"/>
</dbReference>
<dbReference type="InterPro" id="IPR000873">
    <property type="entry name" value="AMP-dep_synth/lig_dom"/>
</dbReference>
<dbReference type="InterPro" id="IPR042099">
    <property type="entry name" value="ANL_N_sf"/>
</dbReference>
<dbReference type="PANTHER" id="PTHR43201">
    <property type="entry name" value="ACYL-COA SYNTHETASE"/>
    <property type="match status" value="1"/>
</dbReference>
<dbReference type="PANTHER" id="PTHR43201:SF5">
    <property type="entry name" value="MEDIUM-CHAIN ACYL-COA LIGASE ACSF2, MITOCHONDRIAL"/>
    <property type="match status" value="1"/>
</dbReference>
<dbReference type="Pfam" id="PF00501">
    <property type="entry name" value="AMP-binding"/>
    <property type="match status" value="1"/>
</dbReference>
<dbReference type="Pfam" id="PF13193">
    <property type="entry name" value="AMP-binding_C"/>
    <property type="match status" value="1"/>
</dbReference>
<dbReference type="SUPFAM" id="SSF56801">
    <property type="entry name" value="Acetyl-CoA synthetase-like"/>
    <property type="match status" value="1"/>
</dbReference>
<dbReference type="PROSITE" id="PS00455">
    <property type="entry name" value="AMP_BINDING"/>
    <property type="match status" value="1"/>
</dbReference>
<comment type="function">
    <text evidence="3">Acyl-CoA synthases catalyze the initial reaction in fatty acid metabolism, by forming a thioester with CoA. Has some preference toward medium-chain substrates. Plays a role in adipocyte differentiation.</text>
</comment>
<comment type="catalytic activity">
    <reaction evidence="3">
        <text>a medium-chain fatty acid + ATP + CoA = a medium-chain fatty acyl-CoA + AMP + diphosphate</text>
        <dbReference type="Rhea" id="RHEA:48340"/>
        <dbReference type="ChEBI" id="CHEBI:30616"/>
        <dbReference type="ChEBI" id="CHEBI:33019"/>
        <dbReference type="ChEBI" id="CHEBI:57287"/>
        <dbReference type="ChEBI" id="CHEBI:59558"/>
        <dbReference type="ChEBI" id="CHEBI:90546"/>
        <dbReference type="ChEBI" id="CHEBI:456215"/>
        <dbReference type="EC" id="6.2.1.2"/>
    </reaction>
</comment>
<comment type="catalytic activity">
    <reaction evidence="3">
        <text>octanoate + ATP + CoA = octanoyl-CoA + AMP + diphosphate</text>
        <dbReference type="Rhea" id="RHEA:33631"/>
        <dbReference type="ChEBI" id="CHEBI:25646"/>
        <dbReference type="ChEBI" id="CHEBI:30616"/>
        <dbReference type="ChEBI" id="CHEBI:33019"/>
        <dbReference type="ChEBI" id="CHEBI:57287"/>
        <dbReference type="ChEBI" id="CHEBI:57386"/>
        <dbReference type="ChEBI" id="CHEBI:456215"/>
    </reaction>
</comment>
<comment type="subcellular location">
    <subcellularLocation>
        <location evidence="5">Mitochondrion</location>
    </subcellularLocation>
</comment>
<comment type="similarity">
    <text evidence="5">Belongs to the ATP-dependent AMP-binding enzyme family.</text>
</comment>
<proteinExistence type="evidence at transcript level"/>
<gene>
    <name evidence="3" type="primary">ACSF2</name>
</gene>
<accession>Q5R9G9</accession>
<feature type="transit peptide" description="Mitochondrion" evidence="4">
    <location>
        <begin position="1"/>
        <end position="41"/>
    </location>
</feature>
<feature type="chain" id="PRO_0000315796" description="Medium-chain acyl-CoA ligase ACSF2, mitochondrial">
    <location>
        <begin position="42"/>
        <end position="615"/>
    </location>
</feature>
<feature type="binding site" evidence="1">
    <location>
        <begin position="263"/>
        <end position="271"/>
    </location>
    <ligand>
        <name>ATP</name>
        <dbReference type="ChEBI" id="CHEBI:30616"/>
    </ligand>
</feature>
<feature type="binding site" evidence="1">
    <location>
        <position position="493"/>
    </location>
    <ligand>
        <name>ATP</name>
        <dbReference type="ChEBI" id="CHEBI:30616"/>
    </ligand>
</feature>
<feature type="binding site" evidence="1">
    <location>
        <position position="508"/>
    </location>
    <ligand>
        <name>ATP</name>
        <dbReference type="ChEBI" id="CHEBI:30616"/>
    </ligand>
</feature>
<feature type="binding site" evidence="1">
    <location>
        <position position="599"/>
    </location>
    <ligand>
        <name>ATP</name>
        <dbReference type="ChEBI" id="CHEBI:30616"/>
    </ligand>
</feature>
<feature type="modified residue" description="N6-acetyllysine" evidence="2">
    <location>
        <position position="179"/>
    </location>
</feature>
<feature type="modified residue" description="N6-acetyllysine; alternate" evidence="2">
    <location>
        <position position="182"/>
    </location>
</feature>
<feature type="modified residue" description="N6-succinyllysine; alternate" evidence="2">
    <location>
        <position position="182"/>
    </location>
</feature>
<feature type="modified residue" description="N6-acetyllysine" evidence="2">
    <location>
        <position position="340"/>
    </location>
</feature>
<feature type="modified residue" description="N6-acetyllysine" evidence="2">
    <location>
        <position position="398"/>
    </location>
</feature>
<feature type="modified residue" description="N6-succinyllysine" evidence="2">
    <location>
        <position position="478"/>
    </location>
</feature>
<feature type="modified residue" description="N6-acetyllysine" evidence="2">
    <location>
        <position position="510"/>
    </location>
</feature>
<feature type="modified residue" description="N6-acetyllysine; alternate" evidence="2">
    <location>
        <position position="544"/>
    </location>
</feature>
<feature type="modified residue" description="N6-succinyllysine; alternate" evidence="2">
    <location>
        <position position="544"/>
    </location>
</feature>
<feature type="modified residue" description="N6-acetyllysine; alternate" evidence="2">
    <location>
        <position position="570"/>
    </location>
</feature>
<feature type="modified residue" description="N6-succinyllysine; alternate" evidence="2">
    <location>
        <position position="570"/>
    </location>
</feature>
<feature type="modified residue" description="N6-succinyllysine" evidence="2">
    <location>
        <position position="599"/>
    </location>
</feature>
<sequence>MAVYVGMLRLGRLCAGSSGVLGARVALSRSWQEARLQGVRFLSSREVDRMVSLPIGGLSYVQGCTKKHLNSKTVGQCLDTTAQRVPEREALVVLHEDVRLTFGQLKEEVDKAASGLLSIGLCKGDRLGMWGPNSYAWVLMQLATAQAGIILVSVNPAYQAMELEYVLKKVGCKALVFPKQFKTQQYYNILKQICPEVDNAQPGGLKSQRLPDLTTVISVDAPLPGTLLLDEVVAAGSTRQHLDQLQYNQQFLSCHDPINIQFTSGTTGSPKGATLSHYNIVNNSNMLGERLKLHEKTPEQLRMILPSPLYHCLGSVGGTMMCLMYGATLILASPVFNGKKALEAISRERGSFLYGTPTMFVDILNQPDFSSYDISTMCGGVIAGSPAPPELIRAIINKINMKDLVVAYGTPENSPVTFAHFPEDTVEQKAESVGRIMPHTEARIMNMEAGTLAELNTPGELCIRGYCVMLGYWGEPQKTEEAVDQDKWYRTGDVATMNEQGFCKIVGRSKDMIIRGGENIYPAELEDFFHTHPKVQEVQVVGVKDDRMGEEICACIRLKDGEETTVEEIKAFCKGKISHFKIPRYIVFVTNYPLTISGKIQKFKLREQMERHLNL</sequence>
<keyword id="KW-0007">Acetylation</keyword>
<keyword id="KW-0067">ATP-binding</keyword>
<keyword id="KW-0276">Fatty acid metabolism</keyword>
<keyword id="KW-0436">Ligase</keyword>
<keyword id="KW-0443">Lipid metabolism</keyword>
<keyword id="KW-0496">Mitochondrion</keyword>
<keyword id="KW-0547">Nucleotide-binding</keyword>
<keyword id="KW-1185">Reference proteome</keyword>
<keyword id="KW-0809">Transit peptide</keyword>
<name>ACSF2_PONAB</name>
<protein>
    <recommendedName>
        <fullName evidence="3">Medium-chain acyl-CoA ligase ACSF2, mitochondrial</fullName>
        <ecNumber evidence="3">6.2.1.2</ecNumber>
    </recommendedName>
</protein>
<reference key="1">
    <citation type="submission" date="2004-11" db="EMBL/GenBank/DDBJ databases">
        <authorList>
            <consortium name="The German cDNA consortium"/>
        </authorList>
    </citation>
    <scope>NUCLEOTIDE SEQUENCE [LARGE SCALE MRNA]</scope>
    <source>
        <tissue>Kidney</tissue>
    </source>
</reference>